<dbReference type="EC" id="5.6.2.1" evidence="1"/>
<dbReference type="EMBL" id="AE004439">
    <property type="protein sequence ID" value="AAK02291.1"/>
    <property type="molecule type" value="Genomic_DNA"/>
</dbReference>
<dbReference type="RefSeq" id="WP_010906526.1">
    <property type="nucleotide sequence ID" value="NC_002663.1"/>
</dbReference>
<dbReference type="SMR" id="Q9CP53"/>
<dbReference type="STRING" id="272843.PM0207"/>
<dbReference type="EnsemblBacteria" id="AAK02291">
    <property type="protein sequence ID" value="AAK02291"/>
    <property type="gene ID" value="PM0207"/>
</dbReference>
<dbReference type="KEGG" id="pmu:PM0207"/>
<dbReference type="PATRIC" id="fig|272843.6.peg.213"/>
<dbReference type="HOGENOM" id="CLU_002929_5_2_6"/>
<dbReference type="OrthoDB" id="9803554at2"/>
<dbReference type="Proteomes" id="UP000000809">
    <property type="component" value="Chromosome"/>
</dbReference>
<dbReference type="GO" id="GO:0043597">
    <property type="term" value="C:cytoplasmic replication fork"/>
    <property type="evidence" value="ECO:0007669"/>
    <property type="project" value="TreeGrafter"/>
</dbReference>
<dbReference type="GO" id="GO:0003677">
    <property type="term" value="F:DNA binding"/>
    <property type="evidence" value="ECO:0007669"/>
    <property type="project" value="UniProtKB-KW"/>
</dbReference>
<dbReference type="GO" id="GO:0003917">
    <property type="term" value="F:DNA topoisomerase type I (single strand cut, ATP-independent) activity"/>
    <property type="evidence" value="ECO:0007669"/>
    <property type="project" value="UniProtKB-UniRule"/>
</dbReference>
<dbReference type="GO" id="GO:0000287">
    <property type="term" value="F:magnesium ion binding"/>
    <property type="evidence" value="ECO:0007669"/>
    <property type="project" value="UniProtKB-UniRule"/>
</dbReference>
<dbReference type="GO" id="GO:0006310">
    <property type="term" value="P:DNA recombination"/>
    <property type="evidence" value="ECO:0007669"/>
    <property type="project" value="TreeGrafter"/>
</dbReference>
<dbReference type="GO" id="GO:0006281">
    <property type="term" value="P:DNA repair"/>
    <property type="evidence" value="ECO:0007669"/>
    <property type="project" value="TreeGrafter"/>
</dbReference>
<dbReference type="GO" id="GO:0006265">
    <property type="term" value="P:DNA topological change"/>
    <property type="evidence" value="ECO:0007669"/>
    <property type="project" value="UniProtKB-UniRule"/>
</dbReference>
<dbReference type="CDD" id="cd00186">
    <property type="entry name" value="TOP1Ac"/>
    <property type="match status" value="1"/>
</dbReference>
<dbReference type="CDD" id="cd03362">
    <property type="entry name" value="TOPRIM_TopoIA_TopoIII"/>
    <property type="match status" value="1"/>
</dbReference>
<dbReference type="FunFam" id="1.10.290.10:FF:000004">
    <property type="entry name" value="DNA topoisomerase 3"/>
    <property type="match status" value="1"/>
</dbReference>
<dbReference type="FunFam" id="3.40.50.140:FF:000004">
    <property type="entry name" value="DNA topoisomerase 3"/>
    <property type="match status" value="1"/>
</dbReference>
<dbReference type="Gene3D" id="3.40.50.140">
    <property type="match status" value="1"/>
</dbReference>
<dbReference type="Gene3D" id="1.10.460.10">
    <property type="entry name" value="Topoisomerase I, domain 2"/>
    <property type="match status" value="1"/>
</dbReference>
<dbReference type="Gene3D" id="2.70.20.10">
    <property type="entry name" value="Topoisomerase I, domain 3"/>
    <property type="match status" value="1"/>
</dbReference>
<dbReference type="Gene3D" id="1.10.290.10">
    <property type="entry name" value="Topoisomerase I, domain 4"/>
    <property type="match status" value="1"/>
</dbReference>
<dbReference type="HAMAP" id="MF_00953">
    <property type="entry name" value="Topoisom_3_prok"/>
    <property type="match status" value="1"/>
</dbReference>
<dbReference type="InterPro" id="IPR000380">
    <property type="entry name" value="Topo_IA"/>
</dbReference>
<dbReference type="InterPro" id="IPR003601">
    <property type="entry name" value="Topo_IA_2"/>
</dbReference>
<dbReference type="InterPro" id="IPR023406">
    <property type="entry name" value="Topo_IA_AS"/>
</dbReference>
<dbReference type="InterPro" id="IPR013497">
    <property type="entry name" value="Topo_IA_cen"/>
</dbReference>
<dbReference type="InterPro" id="IPR013824">
    <property type="entry name" value="Topo_IA_cen_sub1"/>
</dbReference>
<dbReference type="InterPro" id="IPR013825">
    <property type="entry name" value="Topo_IA_cen_sub2"/>
</dbReference>
<dbReference type="InterPro" id="IPR013826">
    <property type="entry name" value="Topo_IA_cen_sub3"/>
</dbReference>
<dbReference type="InterPro" id="IPR023405">
    <property type="entry name" value="Topo_IA_core_domain"/>
</dbReference>
<dbReference type="InterPro" id="IPR003602">
    <property type="entry name" value="Topo_IA_DNA-bd_dom"/>
</dbReference>
<dbReference type="InterPro" id="IPR005738">
    <property type="entry name" value="TopoIII"/>
</dbReference>
<dbReference type="InterPro" id="IPR006171">
    <property type="entry name" value="TOPRIM_dom"/>
</dbReference>
<dbReference type="InterPro" id="IPR034144">
    <property type="entry name" value="TOPRIM_TopoIII"/>
</dbReference>
<dbReference type="NCBIfam" id="NF005829">
    <property type="entry name" value="PRK07726.1"/>
    <property type="match status" value="1"/>
</dbReference>
<dbReference type="NCBIfam" id="TIGR01056">
    <property type="entry name" value="topB"/>
    <property type="match status" value="1"/>
</dbReference>
<dbReference type="PANTHER" id="PTHR11390:SF21">
    <property type="entry name" value="DNA TOPOISOMERASE 3-ALPHA"/>
    <property type="match status" value="1"/>
</dbReference>
<dbReference type="PANTHER" id="PTHR11390">
    <property type="entry name" value="PROKARYOTIC DNA TOPOISOMERASE"/>
    <property type="match status" value="1"/>
</dbReference>
<dbReference type="Pfam" id="PF01131">
    <property type="entry name" value="Topoisom_bac"/>
    <property type="match status" value="1"/>
</dbReference>
<dbReference type="Pfam" id="PF01751">
    <property type="entry name" value="Toprim"/>
    <property type="match status" value="1"/>
</dbReference>
<dbReference type="PRINTS" id="PR00417">
    <property type="entry name" value="PRTPISMRASEI"/>
</dbReference>
<dbReference type="SMART" id="SM00437">
    <property type="entry name" value="TOP1Ac"/>
    <property type="match status" value="1"/>
</dbReference>
<dbReference type="SMART" id="SM00436">
    <property type="entry name" value="TOP1Bc"/>
    <property type="match status" value="1"/>
</dbReference>
<dbReference type="SMART" id="SM00493">
    <property type="entry name" value="TOPRIM"/>
    <property type="match status" value="1"/>
</dbReference>
<dbReference type="SUPFAM" id="SSF56712">
    <property type="entry name" value="Prokaryotic type I DNA topoisomerase"/>
    <property type="match status" value="1"/>
</dbReference>
<dbReference type="PROSITE" id="PS00396">
    <property type="entry name" value="TOPO_IA_1"/>
    <property type="match status" value="1"/>
</dbReference>
<dbReference type="PROSITE" id="PS52039">
    <property type="entry name" value="TOPO_IA_2"/>
    <property type="match status" value="1"/>
</dbReference>
<dbReference type="PROSITE" id="PS50880">
    <property type="entry name" value="TOPRIM"/>
    <property type="match status" value="1"/>
</dbReference>
<protein>
    <recommendedName>
        <fullName evidence="1">DNA topoisomerase 3</fullName>
        <ecNumber evidence="1">5.6.2.1</ecNumber>
    </recommendedName>
    <alternativeName>
        <fullName evidence="1">DNA topoisomerase III</fullName>
    </alternativeName>
</protein>
<gene>
    <name evidence="1" type="primary">topB</name>
    <name type="ordered locus">PM0207</name>
</gene>
<reference key="1">
    <citation type="journal article" date="2001" name="Proc. Natl. Acad. Sci. U.S.A.">
        <title>Complete genomic sequence of Pasteurella multocida Pm70.</title>
        <authorList>
            <person name="May B.J."/>
            <person name="Zhang Q."/>
            <person name="Li L.L."/>
            <person name="Paustian M.L."/>
            <person name="Whittam T.S."/>
            <person name="Kapur V."/>
        </authorList>
    </citation>
    <scope>NUCLEOTIDE SEQUENCE [LARGE SCALE GENOMIC DNA]</scope>
    <source>
        <strain>Pm70</strain>
    </source>
</reference>
<feature type="chain" id="PRO_0000145188" description="DNA topoisomerase 3">
    <location>
        <begin position="1"/>
        <end position="650"/>
    </location>
</feature>
<feature type="domain" description="Toprim" evidence="1">
    <location>
        <begin position="1"/>
        <end position="134"/>
    </location>
</feature>
<feature type="domain" description="Topo IA-type catalytic" evidence="2">
    <location>
        <begin position="155"/>
        <end position="617"/>
    </location>
</feature>
<feature type="region of interest" description="Interaction with DNA" evidence="1">
    <location>
        <begin position="194"/>
        <end position="199"/>
    </location>
</feature>
<feature type="active site" description="O-(5'-phospho-DNA)-tyrosine intermediate" evidence="2">
    <location>
        <position position="342"/>
    </location>
</feature>
<feature type="binding site" evidence="1">
    <location>
        <position position="7"/>
    </location>
    <ligand>
        <name>Mg(2+)</name>
        <dbReference type="ChEBI" id="CHEBI:18420"/>
        <label>1</label>
        <note>catalytic</note>
    </ligand>
</feature>
<feature type="binding site" evidence="1">
    <location>
        <position position="103"/>
    </location>
    <ligand>
        <name>Mg(2+)</name>
        <dbReference type="ChEBI" id="CHEBI:18420"/>
        <label>1</label>
        <note>catalytic</note>
    </ligand>
</feature>
<feature type="binding site" evidence="1">
    <location>
        <position position="103"/>
    </location>
    <ligand>
        <name>Mg(2+)</name>
        <dbReference type="ChEBI" id="CHEBI:18420"/>
        <label>2</label>
    </ligand>
</feature>
<feature type="binding site" evidence="1">
    <location>
        <position position="105"/>
    </location>
    <ligand>
        <name>Mg(2+)</name>
        <dbReference type="ChEBI" id="CHEBI:18420"/>
        <label>2</label>
    </ligand>
</feature>
<feature type="site" description="Interaction with DNA" evidence="1">
    <location>
        <position position="61"/>
    </location>
</feature>
<feature type="site" description="Interaction with DNA" evidence="1">
    <location>
        <position position="170"/>
    </location>
</feature>
<feature type="site" description="Interaction with DNA" evidence="1">
    <location>
        <position position="178"/>
    </location>
</feature>
<feature type="site" description="Interaction with DNA" evidence="1">
    <location>
        <position position="185"/>
    </location>
</feature>
<feature type="site" description="Interaction with DNA" evidence="1">
    <location>
        <position position="344"/>
    </location>
</feature>
<name>TOP3_PASMU</name>
<comment type="function">
    <text evidence="1">Releases the supercoiling and torsional tension of DNA, which is introduced during the DNA replication and transcription, by transiently cleaving and rejoining one strand of the DNA duplex. Introduces a single-strand break via transesterification at a target site in duplex DNA. The scissile phosphodiester is attacked by the catalytic tyrosine of the enzyme, resulting in the formation of a DNA-(5'-phosphotyrosyl)-enzyme intermediate and the expulsion of a 3'-OH DNA strand. The free DNA strand then undergoes passage around the unbroken strand, thus removing DNA supercoils. Finally, in the religation step, the DNA 3'-OH attacks the covalent intermediate to expel the active-site tyrosine and restore the DNA phosphodiester backbone.</text>
</comment>
<comment type="catalytic activity">
    <reaction evidence="1">
        <text>ATP-independent breakage of single-stranded DNA, followed by passage and rejoining.</text>
        <dbReference type="EC" id="5.6.2.1"/>
    </reaction>
</comment>
<comment type="cofactor">
    <cofactor evidence="1">
        <name>Mg(2+)</name>
        <dbReference type="ChEBI" id="CHEBI:18420"/>
    </cofactor>
    <text evidence="1">Binds two Mg(2+) per subunit.</text>
</comment>
<comment type="similarity">
    <text evidence="1 2">Belongs to the type IA topoisomerase family.</text>
</comment>
<sequence>MRLFIAEKPSLARAIADVLPKPHQRGDGFIKCGADDYVTWCIGHLLEQAEPDAYDPKFKQWRLEHLPIIPEKWQLIPRKDVHKQLTIVEKLIHQADILINAGDPDREGQLLVDEVFSYANLSVDKLNQIQRCLISDLNPSAVEKAVNKLQSNRNFIPLATSALARARADWLYGINMTRAYTLRGRQAGYQGVLSVGRVQTPVLGLIVRRDLEIENFKPQDFFEVLAHIQAETPEKITALSAQEKANIPQFKALWQPSKACEDYQDEEGRVLSLGLVENVVKRIAQQPAEVVEYVDKREHESAPLPYSLSALQIDAAKRYGLSAQEVLDICQRLYETHRLITYPRSDCRYLPEEHFGERTKVFQAISRHISDYQPLPDILNPEQKNRCWNDKKVEAHHAIIPTAKNTPVNLNQREWQIYHLIARQYLMQFCPDAEYRKSKITLNIAGGTFIAQARNLQVAGWKQLLGKEDSDEQQEPLLPVVKKGQILFCEKGEIVSKKTQPPKPFTDATLLSAMTGIARFVQDKELKKILRETDGLGTEATRAGIIELLFKRGFLYKKGRNIHSTETGRILIQALPDVATQPDMTAHWESQLTSISQKEMSYQQFMSTLTNFLPELMRYVNFAALRQLSQVEKPQSFSKKMSAKSKKRPT</sequence>
<accession>Q9CP53</accession>
<evidence type="ECO:0000255" key="1">
    <source>
        <dbReference type="HAMAP-Rule" id="MF_00953"/>
    </source>
</evidence>
<evidence type="ECO:0000255" key="2">
    <source>
        <dbReference type="PROSITE-ProRule" id="PRU01383"/>
    </source>
</evidence>
<keyword id="KW-0238">DNA-binding</keyword>
<keyword id="KW-0413">Isomerase</keyword>
<keyword id="KW-0460">Magnesium</keyword>
<keyword id="KW-0479">Metal-binding</keyword>
<keyword id="KW-1185">Reference proteome</keyword>
<keyword id="KW-0799">Topoisomerase</keyword>
<proteinExistence type="inferred from homology"/>
<organism>
    <name type="scientific">Pasteurella multocida (strain Pm70)</name>
    <dbReference type="NCBI Taxonomy" id="272843"/>
    <lineage>
        <taxon>Bacteria</taxon>
        <taxon>Pseudomonadati</taxon>
        <taxon>Pseudomonadota</taxon>
        <taxon>Gammaproteobacteria</taxon>
        <taxon>Pasteurellales</taxon>
        <taxon>Pasteurellaceae</taxon>
        <taxon>Pasteurella</taxon>
    </lineage>
</organism>